<organism>
    <name type="scientific">Serratia proteamaculans (strain 568)</name>
    <dbReference type="NCBI Taxonomy" id="399741"/>
    <lineage>
        <taxon>Bacteria</taxon>
        <taxon>Pseudomonadati</taxon>
        <taxon>Pseudomonadota</taxon>
        <taxon>Gammaproteobacteria</taxon>
        <taxon>Enterobacterales</taxon>
        <taxon>Yersiniaceae</taxon>
        <taxon>Serratia</taxon>
    </lineage>
</organism>
<reference key="1">
    <citation type="submission" date="2007-09" db="EMBL/GenBank/DDBJ databases">
        <title>Complete sequence of chromosome of Serratia proteamaculans 568.</title>
        <authorList>
            <consortium name="US DOE Joint Genome Institute"/>
            <person name="Copeland A."/>
            <person name="Lucas S."/>
            <person name="Lapidus A."/>
            <person name="Barry K."/>
            <person name="Glavina del Rio T."/>
            <person name="Dalin E."/>
            <person name="Tice H."/>
            <person name="Pitluck S."/>
            <person name="Chain P."/>
            <person name="Malfatti S."/>
            <person name="Shin M."/>
            <person name="Vergez L."/>
            <person name="Schmutz J."/>
            <person name="Larimer F."/>
            <person name="Land M."/>
            <person name="Hauser L."/>
            <person name="Kyrpides N."/>
            <person name="Kim E."/>
            <person name="Taghavi S."/>
            <person name="Newman L."/>
            <person name="Vangronsveld J."/>
            <person name="van der Lelie D."/>
            <person name="Richardson P."/>
        </authorList>
    </citation>
    <scope>NUCLEOTIDE SEQUENCE [LARGE SCALE GENOMIC DNA]</scope>
    <source>
        <strain>568</strain>
    </source>
</reference>
<sequence length="183" mass="21170">MSQPPKVLLLYAHPESQDSVANRVLLRPAQQLEHVTVHDLYAHYPDFFIDIHHEQQLLREHQVIVFQHPLYTYSCPALLKEWLDRVLSRGFASGMGGNALAGKYWRSVITTGEPEGAYRTGGYNRYPIEDILRPFELTAAMCHMHWLTPMLVYWARRQKPEVLESHATAYGDWLRNPLPHGGR</sequence>
<dbReference type="EC" id="1.6.5.2" evidence="1"/>
<dbReference type="EMBL" id="CP000826">
    <property type="protein sequence ID" value="ABV43654.1"/>
    <property type="molecule type" value="Genomic_DNA"/>
</dbReference>
<dbReference type="SMR" id="A8GKL4"/>
<dbReference type="STRING" id="399741.Spro_4561"/>
<dbReference type="KEGG" id="spe:Spro_4561"/>
<dbReference type="eggNOG" id="COG2249">
    <property type="taxonomic scope" value="Bacteria"/>
</dbReference>
<dbReference type="HOGENOM" id="CLU_058643_0_1_6"/>
<dbReference type="GO" id="GO:0005886">
    <property type="term" value="C:plasma membrane"/>
    <property type="evidence" value="ECO:0007669"/>
    <property type="project" value="UniProtKB-SubCell"/>
</dbReference>
<dbReference type="GO" id="GO:0009055">
    <property type="term" value="F:electron transfer activity"/>
    <property type="evidence" value="ECO:0007669"/>
    <property type="project" value="TreeGrafter"/>
</dbReference>
<dbReference type="GO" id="GO:0010181">
    <property type="term" value="F:FMN binding"/>
    <property type="evidence" value="ECO:0007669"/>
    <property type="project" value="TreeGrafter"/>
</dbReference>
<dbReference type="GO" id="GO:0050136">
    <property type="term" value="F:NADH:ubiquinone reductase (non-electrogenic) activity"/>
    <property type="evidence" value="ECO:0007669"/>
    <property type="project" value="RHEA"/>
</dbReference>
<dbReference type="GO" id="GO:0008753">
    <property type="term" value="F:NADPH dehydrogenase (quinone) activity"/>
    <property type="evidence" value="ECO:0007669"/>
    <property type="project" value="RHEA"/>
</dbReference>
<dbReference type="GO" id="GO:1901381">
    <property type="term" value="P:positive regulation of potassium ion transmembrane transport"/>
    <property type="evidence" value="ECO:0007669"/>
    <property type="project" value="UniProtKB-UniRule"/>
</dbReference>
<dbReference type="GO" id="GO:0006813">
    <property type="term" value="P:potassium ion transport"/>
    <property type="evidence" value="ECO:0007669"/>
    <property type="project" value="InterPro"/>
</dbReference>
<dbReference type="FunFam" id="3.40.50.360:FF:000013">
    <property type="entry name" value="Glutathione-regulated potassium-efflux system ancillary protein KefG"/>
    <property type="match status" value="1"/>
</dbReference>
<dbReference type="Gene3D" id="3.40.50.360">
    <property type="match status" value="1"/>
</dbReference>
<dbReference type="HAMAP" id="MF_01415">
    <property type="entry name" value="K_H_efflux_KefG"/>
    <property type="match status" value="1"/>
</dbReference>
<dbReference type="InterPro" id="IPR003680">
    <property type="entry name" value="Flavodoxin_fold"/>
</dbReference>
<dbReference type="InterPro" id="IPR029039">
    <property type="entry name" value="Flavoprotein-like_sf"/>
</dbReference>
<dbReference type="InterPro" id="IPR023947">
    <property type="entry name" value="K_H_efflux_KefG"/>
</dbReference>
<dbReference type="InterPro" id="IPR046980">
    <property type="entry name" value="KefG/KefF"/>
</dbReference>
<dbReference type="NCBIfam" id="NF003430">
    <property type="entry name" value="PRK04930.1"/>
    <property type="match status" value="1"/>
</dbReference>
<dbReference type="PANTHER" id="PTHR47307">
    <property type="entry name" value="GLUTATHIONE-REGULATED POTASSIUM-EFFLUX SYSTEM ANCILLARY PROTEIN KEFG"/>
    <property type="match status" value="1"/>
</dbReference>
<dbReference type="PANTHER" id="PTHR47307:SF1">
    <property type="entry name" value="GLUTATHIONE-REGULATED POTASSIUM-EFFLUX SYSTEM ANCILLARY PROTEIN KEFG"/>
    <property type="match status" value="1"/>
</dbReference>
<dbReference type="Pfam" id="PF02525">
    <property type="entry name" value="Flavodoxin_2"/>
    <property type="match status" value="1"/>
</dbReference>
<dbReference type="SUPFAM" id="SSF52218">
    <property type="entry name" value="Flavoproteins"/>
    <property type="match status" value="1"/>
</dbReference>
<evidence type="ECO:0000255" key="1">
    <source>
        <dbReference type="HAMAP-Rule" id="MF_01415"/>
    </source>
</evidence>
<keyword id="KW-0997">Cell inner membrane</keyword>
<keyword id="KW-1003">Cell membrane</keyword>
<keyword id="KW-0472">Membrane</keyword>
<keyword id="KW-0520">NAD</keyword>
<keyword id="KW-0560">Oxidoreductase</keyword>
<name>KEFG_SERP5</name>
<gene>
    <name evidence="1" type="primary">kefG</name>
    <name type="ordered locus">Spro_4561</name>
</gene>
<comment type="function">
    <text evidence="1">Regulatory subunit of a potassium efflux system that confers protection against electrophiles. Required for full activity of KefB.</text>
</comment>
<comment type="catalytic activity">
    <reaction evidence="1">
        <text>a quinone + NADH + H(+) = a quinol + NAD(+)</text>
        <dbReference type="Rhea" id="RHEA:46160"/>
        <dbReference type="ChEBI" id="CHEBI:15378"/>
        <dbReference type="ChEBI" id="CHEBI:24646"/>
        <dbReference type="ChEBI" id="CHEBI:57540"/>
        <dbReference type="ChEBI" id="CHEBI:57945"/>
        <dbReference type="ChEBI" id="CHEBI:132124"/>
        <dbReference type="EC" id="1.6.5.2"/>
    </reaction>
</comment>
<comment type="catalytic activity">
    <reaction evidence="1">
        <text>a quinone + NADPH + H(+) = a quinol + NADP(+)</text>
        <dbReference type="Rhea" id="RHEA:46164"/>
        <dbReference type="ChEBI" id="CHEBI:15378"/>
        <dbReference type="ChEBI" id="CHEBI:24646"/>
        <dbReference type="ChEBI" id="CHEBI:57783"/>
        <dbReference type="ChEBI" id="CHEBI:58349"/>
        <dbReference type="ChEBI" id="CHEBI:132124"/>
        <dbReference type="EC" id="1.6.5.2"/>
    </reaction>
</comment>
<comment type="subunit">
    <text evidence="1">Interacts with KefB.</text>
</comment>
<comment type="subcellular location">
    <subcellularLocation>
        <location evidence="1">Cell inner membrane</location>
        <topology evidence="1">Peripheral membrane protein</topology>
        <orientation evidence="1">Cytoplasmic side</orientation>
    </subcellularLocation>
</comment>
<comment type="similarity">
    <text evidence="1">Belongs to the NAD(P)H dehydrogenase (quinone) family. KefG subfamily.</text>
</comment>
<accession>A8GKL4</accession>
<proteinExistence type="inferred from homology"/>
<feature type="chain" id="PRO_1000068482" description="Glutathione-regulated potassium-efflux system ancillary protein KefG">
    <location>
        <begin position="1"/>
        <end position="183"/>
    </location>
</feature>
<protein>
    <recommendedName>
        <fullName evidence="1">Glutathione-regulated potassium-efflux system ancillary protein KefG</fullName>
    </recommendedName>
    <alternativeName>
        <fullName evidence="1">Putative quinone oxidoreductase KefG</fullName>
        <ecNumber evidence="1">1.6.5.2</ecNumber>
    </alternativeName>
</protein>